<proteinExistence type="evidence at transcript level"/>
<sequence length="431" mass="49660">MRPEERWNHVGLVQREEADSVLEEPINVDEEDGGLQICRVCGDKANGYHFNVMTCEGCKGFFRRAMKRNVRLRCPFRKGTCEITRKTRRQCQACRLRKCLESGMKKEMIMSDAAVEQRRALIKRKKREKIEAPPPGGQGLTEEQQALIQELMDAQMQTFDTTFSHFKDFRLPAVFHSDCELPEVLQASLLEDPATWSQIMKDSVPMKISVQLRGEDGSIWNYQPPSKSDGKEIIPLLPHLADVSTYMFKGVINFAKVISHFRELPIEDQISLLKGATFEMCILRFNTMFDTETGTWECGRLAYCFEDPNGGFQKLLLDPLMKFHCMLKKLQLREEEYVLMQAISLFSPDRPGVVQRSVVDQLQERFALTLKAYIECSRPYPAHRFLFLKIMAVLTELRSINAQQTQQLLRIQDTHPFATPLMQELFSSTDG</sequence>
<accession>Q9R1A7</accession>
<protein>
    <recommendedName>
        <fullName>Nuclear receptor subfamily 1 group I member 2</fullName>
    </recommendedName>
    <alternativeName>
        <fullName>Orphan nuclear receptor PXR</fullName>
    </alternativeName>
    <alternativeName>
        <fullName>Pregnane X receptor</fullName>
    </alternativeName>
</protein>
<keyword id="KW-0010">Activator</keyword>
<keyword id="KW-0238">DNA-binding</keyword>
<keyword id="KW-0479">Metal-binding</keyword>
<keyword id="KW-0539">Nucleus</keyword>
<keyword id="KW-0675">Receptor</keyword>
<keyword id="KW-1185">Reference proteome</keyword>
<keyword id="KW-0804">Transcription</keyword>
<keyword id="KW-0805">Transcription regulation</keyword>
<keyword id="KW-0862">Zinc</keyword>
<keyword id="KW-0863">Zinc-finger</keyword>
<gene>
    <name type="primary">Nr1i2</name>
    <name type="synonym">Pxr</name>
</gene>
<reference key="1">
    <citation type="journal article" date="1999" name="Arch. Biochem. Biophys.">
        <title>Rat pregnane X receptor: molecular cloning, tissue distribution, and xenobiotic regulation.</title>
        <authorList>
            <person name="Zhang H."/>
            <person name="LeCulyse E."/>
            <person name="Liu L."/>
            <person name="Hu M."/>
            <person name="Matoney L."/>
            <person name="Zhu W."/>
            <person name="Yan B."/>
        </authorList>
    </citation>
    <scope>NUCLEOTIDE SEQUENCE [MRNA]</scope>
    <source>
        <strain>Sprague-Dawley</strain>
    </source>
</reference>
<evidence type="ECO:0000250" key="1"/>
<evidence type="ECO:0000250" key="2">
    <source>
        <dbReference type="UniProtKB" id="O54915"/>
    </source>
</evidence>
<evidence type="ECO:0000250" key="3">
    <source>
        <dbReference type="UniProtKB" id="O75469"/>
    </source>
</evidence>
<evidence type="ECO:0000255" key="4">
    <source>
        <dbReference type="PROSITE-ProRule" id="PRU00407"/>
    </source>
</evidence>
<evidence type="ECO:0000255" key="5">
    <source>
        <dbReference type="PROSITE-ProRule" id="PRU01189"/>
    </source>
</evidence>
<evidence type="ECO:0000305" key="6"/>
<name>NR1I2_RAT</name>
<organism>
    <name type="scientific">Rattus norvegicus</name>
    <name type="common">Rat</name>
    <dbReference type="NCBI Taxonomy" id="10116"/>
    <lineage>
        <taxon>Eukaryota</taxon>
        <taxon>Metazoa</taxon>
        <taxon>Chordata</taxon>
        <taxon>Craniata</taxon>
        <taxon>Vertebrata</taxon>
        <taxon>Euteleostomi</taxon>
        <taxon>Mammalia</taxon>
        <taxon>Eutheria</taxon>
        <taxon>Euarchontoglires</taxon>
        <taxon>Glires</taxon>
        <taxon>Rodentia</taxon>
        <taxon>Myomorpha</taxon>
        <taxon>Muroidea</taxon>
        <taxon>Muridae</taxon>
        <taxon>Murinae</taxon>
        <taxon>Rattus</taxon>
    </lineage>
</organism>
<feature type="chain" id="PRO_0000053550" description="Nuclear receptor subfamily 1 group I member 2">
    <location>
        <begin position="1"/>
        <end position="431"/>
    </location>
</feature>
<feature type="domain" description="NR LBD" evidence="5">
    <location>
        <begin position="143"/>
        <end position="430"/>
    </location>
</feature>
<feature type="DNA-binding region" description="Nuclear receptor" evidence="4">
    <location>
        <begin position="38"/>
        <end position="104"/>
    </location>
</feature>
<feature type="zinc finger region" description="NR C4-type" evidence="4">
    <location>
        <begin position="38"/>
        <end position="58"/>
    </location>
</feature>
<feature type="zinc finger region" description="NR C4-type" evidence="4">
    <location>
        <begin position="74"/>
        <end position="99"/>
    </location>
</feature>
<feature type="region of interest" description="Hinge">
    <location>
        <begin position="105"/>
        <end position="142"/>
    </location>
</feature>
<feature type="short sequence motif" description="Bipartite nuclear localization signal" evidence="1">
    <location>
        <begin position="63"/>
        <end position="89"/>
    </location>
</feature>
<feature type="binding site" evidence="3">
    <location>
        <position position="244"/>
    </location>
    <ligand>
        <name>hyperforin</name>
        <dbReference type="ChEBI" id="CHEBI:5834"/>
        <note>agonist</note>
    </ligand>
</feature>
<feature type="binding site" evidence="3">
    <location>
        <begin position="282"/>
        <end position="285"/>
    </location>
    <ligand>
        <name>hyperforin</name>
        <dbReference type="ChEBI" id="CHEBI:5834"/>
        <note>agonist</note>
    </ligand>
</feature>
<comment type="function">
    <text evidence="1">Nuclear receptor that binds and is activated by a variety of endogenous and xenobiotic compounds. Transcription factor that activates the transcription of multiple genes involved in the metabolism and secretion of potentially harmful xenobiotics, endogenous compounds and drugs. Response to specific ligands is species-specific, due to differences in the ligand-binding domain. Activated by naturally occurring steroids, such as pregnenolone and progesterone. Binds to a response element in the promoters of the CYP3A4 and ABCB1/MDR1 genes (By similarity).</text>
</comment>
<comment type="subunit">
    <text evidence="2 3">Heterodimer with RXRA (By similarity). Interacts with NCOA1 (By similarity). Interacts (via domain NR LBD) with CRY1 and CRY2 in a ligand-dependent manner (By similarity).</text>
</comment>
<comment type="subcellular location">
    <subcellularLocation>
        <location evidence="4">Nucleus</location>
    </subcellularLocation>
</comment>
<comment type="similarity">
    <text evidence="6">Belongs to the nuclear hormone receptor family. NR1 subfamily.</text>
</comment>
<dbReference type="EMBL" id="AF151377">
    <property type="protein sequence ID" value="AAD47214.1"/>
    <property type="molecule type" value="mRNA"/>
</dbReference>
<dbReference type="RefSeq" id="NP_443212.1">
    <property type="nucleotide sequence ID" value="NM_052980.2"/>
</dbReference>
<dbReference type="SMR" id="Q9R1A7"/>
<dbReference type="FunCoup" id="Q9R1A7">
    <property type="interactions" value="184"/>
</dbReference>
<dbReference type="STRING" id="10116.ENSRNOP00000003934"/>
<dbReference type="BindingDB" id="Q9R1A7"/>
<dbReference type="ChEMBL" id="CHEMBL2146315"/>
<dbReference type="PhosphoSitePlus" id="Q9R1A7"/>
<dbReference type="PaxDb" id="10116-ENSRNOP00000003934"/>
<dbReference type="Ensembl" id="ENSRNOT00000003934.5">
    <property type="protein sequence ID" value="ENSRNOP00000003934.3"/>
    <property type="gene ID" value="ENSRNOG00000002906.6"/>
</dbReference>
<dbReference type="GeneID" id="84385"/>
<dbReference type="KEGG" id="rno:84385"/>
<dbReference type="UCSC" id="RGD:69057">
    <property type="organism name" value="rat"/>
</dbReference>
<dbReference type="AGR" id="RGD:69057"/>
<dbReference type="CTD" id="8856"/>
<dbReference type="RGD" id="69057">
    <property type="gene designation" value="Nr1i2"/>
</dbReference>
<dbReference type="eggNOG" id="KOG3575">
    <property type="taxonomic scope" value="Eukaryota"/>
</dbReference>
<dbReference type="GeneTree" id="ENSGT00940000161118"/>
<dbReference type="HOGENOM" id="CLU_007368_12_0_1"/>
<dbReference type="InParanoid" id="Q9R1A7"/>
<dbReference type="OMA" id="GTCEITQ"/>
<dbReference type="OrthoDB" id="6355676at2759"/>
<dbReference type="PhylomeDB" id="Q9R1A7"/>
<dbReference type="TreeFam" id="TF316304"/>
<dbReference type="Reactome" id="R-RNO-383280">
    <property type="pathway name" value="Nuclear Receptor transcription pathway"/>
</dbReference>
<dbReference type="Reactome" id="R-RNO-4090294">
    <property type="pathway name" value="SUMOylation of intracellular receptors"/>
</dbReference>
<dbReference type="PRO" id="PR:Q9R1A7"/>
<dbReference type="Proteomes" id="UP000002494">
    <property type="component" value="Chromosome 11"/>
</dbReference>
<dbReference type="Bgee" id="ENSRNOG00000002906">
    <property type="expression patterns" value="Expressed in liver and 11 other cell types or tissues"/>
</dbReference>
<dbReference type="GO" id="GO:0045111">
    <property type="term" value="C:intermediate filament cytoskeleton"/>
    <property type="evidence" value="ECO:0007669"/>
    <property type="project" value="Ensembl"/>
</dbReference>
<dbReference type="GO" id="GO:0016604">
    <property type="term" value="C:nuclear body"/>
    <property type="evidence" value="ECO:0007669"/>
    <property type="project" value="Ensembl"/>
</dbReference>
<dbReference type="GO" id="GO:0005634">
    <property type="term" value="C:nucleus"/>
    <property type="evidence" value="ECO:0000318"/>
    <property type="project" value="GO_Central"/>
</dbReference>
<dbReference type="GO" id="GO:0005667">
    <property type="term" value="C:transcription regulator complex"/>
    <property type="evidence" value="ECO:0000266"/>
    <property type="project" value="RGD"/>
</dbReference>
<dbReference type="GO" id="GO:0001228">
    <property type="term" value="F:DNA-binding transcription activator activity, RNA polymerase II-specific"/>
    <property type="evidence" value="ECO:0000266"/>
    <property type="project" value="RGD"/>
</dbReference>
<dbReference type="GO" id="GO:0004879">
    <property type="term" value="F:nuclear receptor activity"/>
    <property type="evidence" value="ECO:0000314"/>
    <property type="project" value="RGD"/>
</dbReference>
<dbReference type="GO" id="GO:0016922">
    <property type="term" value="F:nuclear receptor binding"/>
    <property type="evidence" value="ECO:0000266"/>
    <property type="project" value="RGD"/>
</dbReference>
<dbReference type="GO" id="GO:0000978">
    <property type="term" value="F:RNA polymerase II cis-regulatory region sequence-specific DNA binding"/>
    <property type="evidence" value="ECO:0000318"/>
    <property type="project" value="GO_Central"/>
</dbReference>
<dbReference type="GO" id="GO:0000977">
    <property type="term" value="F:RNA polymerase II transcription regulatory region sequence-specific DNA binding"/>
    <property type="evidence" value="ECO:0000266"/>
    <property type="project" value="RGD"/>
</dbReference>
<dbReference type="GO" id="GO:1990837">
    <property type="term" value="F:sequence-specific double-stranded DNA binding"/>
    <property type="evidence" value="ECO:0000266"/>
    <property type="project" value="RGD"/>
</dbReference>
<dbReference type="GO" id="GO:0008270">
    <property type="term" value="F:zinc ion binding"/>
    <property type="evidence" value="ECO:0007669"/>
    <property type="project" value="UniProtKB-KW"/>
</dbReference>
<dbReference type="GO" id="GO:0030154">
    <property type="term" value="P:cell differentiation"/>
    <property type="evidence" value="ECO:0000318"/>
    <property type="project" value="GO_Central"/>
</dbReference>
<dbReference type="GO" id="GO:0071219">
    <property type="term" value="P:cellular response to molecule of bacterial origin"/>
    <property type="evidence" value="ECO:0007669"/>
    <property type="project" value="Ensembl"/>
</dbReference>
<dbReference type="GO" id="GO:0071357">
    <property type="term" value="P:cellular response to type I interferon"/>
    <property type="evidence" value="ECO:0000266"/>
    <property type="project" value="RGD"/>
</dbReference>
<dbReference type="GO" id="GO:0030522">
    <property type="term" value="P:intracellular receptor signaling pathway"/>
    <property type="evidence" value="ECO:0000318"/>
    <property type="project" value="GO_Central"/>
</dbReference>
<dbReference type="GO" id="GO:0045892">
    <property type="term" value="P:negative regulation of DNA-templated transcription"/>
    <property type="evidence" value="ECO:0000266"/>
    <property type="project" value="RGD"/>
</dbReference>
<dbReference type="GO" id="GO:0000122">
    <property type="term" value="P:negative regulation of transcription by RNA polymerase II"/>
    <property type="evidence" value="ECO:0000318"/>
    <property type="project" value="GO_Central"/>
</dbReference>
<dbReference type="GO" id="GO:0045893">
    <property type="term" value="P:positive regulation of DNA-templated transcription"/>
    <property type="evidence" value="ECO:0000250"/>
    <property type="project" value="UniProtKB"/>
</dbReference>
<dbReference type="GO" id="GO:0010628">
    <property type="term" value="P:positive regulation of gene expression"/>
    <property type="evidence" value="ECO:0000266"/>
    <property type="project" value="RGD"/>
</dbReference>
<dbReference type="GO" id="GO:0045944">
    <property type="term" value="P:positive regulation of transcription by RNA polymerase II"/>
    <property type="evidence" value="ECO:0000266"/>
    <property type="project" value="RGD"/>
</dbReference>
<dbReference type="GO" id="GO:0006355">
    <property type="term" value="P:regulation of DNA-templated transcription"/>
    <property type="evidence" value="ECO:0000266"/>
    <property type="project" value="RGD"/>
</dbReference>
<dbReference type="GO" id="GO:0042178">
    <property type="term" value="P:xenobiotic catabolic process"/>
    <property type="evidence" value="ECO:0000250"/>
    <property type="project" value="UniProtKB"/>
</dbReference>
<dbReference type="GO" id="GO:0006805">
    <property type="term" value="P:xenobiotic metabolic process"/>
    <property type="evidence" value="ECO:0000250"/>
    <property type="project" value="UniProtKB"/>
</dbReference>
<dbReference type="GO" id="GO:0042908">
    <property type="term" value="P:xenobiotic transport"/>
    <property type="evidence" value="ECO:0000250"/>
    <property type="project" value="UniProtKB"/>
</dbReference>
<dbReference type="FunFam" id="1.10.565.10:FF:000024">
    <property type="entry name" value="Nuclear receptor subfamily 1 group I member 2"/>
    <property type="match status" value="1"/>
</dbReference>
<dbReference type="FunFam" id="3.30.50.10:FF:000033">
    <property type="entry name" value="Nuclear receptor subfamily 1 group I member 2"/>
    <property type="match status" value="1"/>
</dbReference>
<dbReference type="Gene3D" id="3.30.50.10">
    <property type="entry name" value="Erythroid Transcription Factor GATA-1, subunit A"/>
    <property type="match status" value="1"/>
</dbReference>
<dbReference type="Gene3D" id="1.10.565.10">
    <property type="entry name" value="Retinoid X Receptor"/>
    <property type="match status" value="1"/>
</dbReference>
<dbReference type="InterPro" id="IPR035500">
    <property type="entry name" value="NHR-like_dom_sf"/>
</dbReference>
<dbReference type="InterPro" id="IPR000536">
    <property type="entry name" value="Nucl_hrmn_rcpt_lig-bd"/>
</dbReference>
<dbReference type="InterPro" id="IPR050234">
    <property type="entry name" value="Nuclear_hormone_rcpt_NR1"/>
</dbReference>
<dbReference type="InterPro" id="IPR001723">
    <property type="entry name" value="Nuclear_hrmn_rcpt"/>
</dbReference>
<dbReference type="InterPro" id="IPR001628">
    <property type="entry name" value="Znf_hrmn_rcpt"/>
</dbReference>
<dbReference type="InterPro" id="IPR013088">
    <property type="entry name" value="Znf_NHR/GATA"/>
</dbReference>
<dbReference type="PANTHER" id="PTHR24082">
    <property type="entry name" value="NUCLEAR HORMONE RECEPTOR"/>
    <property type="match status" value="1"/>
</dbReference>
<dbReference type="PANTHER" id="PTHR24082:SF39">
    <property type="entry name" value="NUCLEAR RECEPTOR SUBFAMILY 1 GROUP I MEMBER 2"/>
    <property type="match status" value="1"/>
</dbReference>
<dbReference type="Pfam" id="PF00104">
    <property type="entry name" value="Hormone_recep"/>
    <property type="match status" value="1"/>
</dbReference>
<dbReference type="Pfam" id="PF00105">
    <property type="entry name" value="zf-C4"/>
    <property type="match status" value="1"/>
</dbReference>
<dbReference type="PRINTS" id="PR00398">
    <property type="entry name" value="STRDHORMONER"/>
</dbReference>
<dbReference type="PRINTS" id="PR00047">
    <property type="entry name" value="STROIDFINGER"/>
</dbReference>
<dbReference type="SMART" id="SM00430">
    <property type="entry name" value="HOLI"/>
    <property type="match status" value="1"/>
</dbReference>
<dbReference type="SMART" id="SM00399">
    <property type="entry name" value="ZnF_C4"/>
    <property type="match status" value="1"/>
</dbReference>
<dbReference type="SUPFAM" id="SSF57716">
    <property type="entry name" value="Glucocorticoid receptor-like (DNA-binding domain)"/>
    <property type="match status" value="1"/>
</dbReference>
<dbReference type="SUPFAM" id="SSF48508">
    <property type="entry name" value="Nuclear receptor ligand-binding domain"/>
    <property type="match status" value="1"/>
</dbReference>
<dbReference type="PROSITE" id="PS51843">
    <property type="entry name" value="NR_LBD"/>
    <property type="match status" value="1"/>
</dbReference>
<dbReference type="PROSITE" id="PS00031">
    <property type="entry name" value="NUCLEAR_REC_DBD_1"/>
    <property type="match status" value="1"/>
</dbReference>
<dbReference type="PROSITE" id="PS51030">
    <property type="entry name" value="NUCLEAR_REC_DBD_2"/>
    <property type="match status" value="1"/>
</dbReference>